<name>IRAK4_MOUSE</name>
<accession>Q8R4K2</accession>
<accession>Q80WW1</accession>
<feature type="chain" id="PRO_0000086036" description="Interleukin-1 receptor-associated kinase 4">
    <location>
        <begin position="1"/>
        <end position="459"/>
    </location>
</feature>
<feature type="domain" description="Death">
    <location>
        <begin position="20"/>
        <end position="104"/>
    </location>
</feature>
<feature type="domain" description="Protein kinase" evidence="3">
    <location>
        <begin position="186"/>
        <end position="454"/>
    </location>
</feature>
<feature type="region of interest" description="Disordered" evidence="4">
    <location>
        <begin position="115"/>
        <end position="161"/>
    </location>
</feature>
<feature type="active site" description="Proton acceptor" evidence="3">
    <location>
        <position position="311"/>
    </location>
</feature>
<feature type="binding site" evidence="3">
    <location>
        <begin position="192"/>
        <end position="200"/>
    </location>
    <ligand>
        <name>ATP</name>
        <dbReference type="ChEBI" id="CHEBI:30616"/>
    </ligand>
</feature>
<feature type="binding site" evidence="3">
    <location>
        <position position="213"/>
    </location>
    <ligand>
        <name>ATP</name>
        <dbReference type="ChEBI" id="CHEBI:30616"/>
    </ligand>
</feature>
<feature type="binding site" evidence="3">
    <location>
        <begin position="313"/>
        <end position="316"/>
    </location>
    <ligand>
        <name>ATP</name>
        <dbReference type="ChEBI" id="CHEBI:30616"/>
    </ligand>
</feature>
<feature type="binding site" evidence="3">
    <location>
        <position position="329"/>
    </location>
    <ligand>
        <name>ATP</name>
        <dbReference type="ChEBI" id="CHEBI:30616"/>
    </ligand>
</feature>
<feature type="modified residue" description="N-acetylmethionine" evidence="2">
    <location>
        <position position="1"/>
    </location>
</feature>
<feature type="modified residue" description="N6-acetyllysine" evidence="2">
    <location>
        <position position="34"/>
    </location>
</feature>
<feature type="modified residue" description="Phosphothreonine" evidence="2">
    <location>
        <position position="342"/>
    </location>
</feature>
<feature type="modified residue" description="Phosphothreonine" evidence="2">
    <location>
        <position position="345"/>
    </location>
</feature>
<feature type="modified residue" description="Phosphoserine" evidence="2">
    <location>
        <position position="346"/>
    </location>
</feature>
<feature type="sequence conflict" description="In Ref. 3; AAH51676." evidence="8" ref="3">
    <original>K</original>
    <variation>R</variation>
    <location>
        <position position="321"/>
    </location>
</feature>
<feature type="helix" evidence="9">
    <location>
        <begin position="11"/>
        <end position="13"/>
    </location>
</feature>
<feature type="helix" evidence="9">
    <location>
        <begin position="16"/>
        <end position="26"/>
    </location>
</feature>
<feature type="helix" evidence="9">
    <location>
        <begin position="28"/>
        <end position="30"/>
    </location>
</feature>
<feature type="helix" evidence="9">
    <location>
        <begin position="31"/>
        <end position="38"/>
    </location>
</feature>
<feature type="strand" evidence="9">
    <location>
        <begin position="44"/>
        <end position="48"/>
    </location>
</feature>
<feature type="helix" evidence="9">
    <location>
        <begin position="50"/>
        <end position="58"/>
    </location>
</feature>
<feature type="turn" evidence="9">
    <location>
        <begin position="59"/>
        <end position="63"/>
    </location>
</feature>
<feature type="helix" evidence="9">
    <location>
        <begin position="66"/>
        <end position="74"/>
    </location>
</feature>
<feature type="helix" evidence="9">
    <location>
        <begin position="75"/>
        <end position="77"/>
    </location>
</feature>
<feature type="helix" evidence="9">
    <location>
        <begin position="81"/>
        <end position="90"/>
    </location>
</feature>
<feature type="helix" evidence="9">
    <location>
        <begin position="94"/>
        <end position="100"/>
    </location>
</feature>
<feature type="helix" evidence="9">
    <location>
        <begin position="102"/>
        <end position="104"/>
    </location>
</feature>
<comment type="function">
    <text evidence="1">Serine/threonine-protein kinase that plays a critical role in initiating innate immune response against foreign pathogens. Involved in Toll-like receptor (TLR) and IL-1R signaling pathways. Is rapidly recruited by MYD88 to the receptor-signaling complex upon TLR activation to form the Myddosome together with IRAK2. Phosphorylates initially IRAK1, thus stimulating the kinase activity and intensive autophosphorylation of IRAK1. Phosphorylates E3 ubiquitin ligases Pellino proteins (PELI1, PELI2 and PELI3) to promote pellino-mediated polyubiquitination of IRAK1. Then, the ubiquitin-binding domain of IKBKG/NEMO binds to polyubiquitinated IRAK1 bringing together the IRAK1-MAP3K7/TAK1-TRAF6 complex and the NEMO-IKKA-IKKB complex. In turn, MAP3K7/TAK1 activates IKKs (CHUK/IKKA and IKBKB/IKKB) leading to NF-kappa-B nuclear translocation and activation. Alternatively, phosphorylates TIRAP to promote its ubiquitination and subsequent degradation. Phosphorylates NCF1 and regulates NADPH oxidase activation after LPS stimulation suggesting a similar mechanism during microbial infections (By similarity).</text>
</comment>
<comment type="catalytic activity">
    <reaction>
        <text>L-seryl-[protein] + ATP = O-phospho-L-seryl-[protein] + ADP + H(+)</text>
        <dbReference type="Rhea" id="RHEA:17989"/>
        <dbReference type="Rhea" id="RHEA-COMP:9863"/>
        <dbReference type="Rhea" id="RHEA-COMP:11604"/>
        <dbReference type="ChEBI" id="CHEBI:15378"/>
        <dbReference type="ChEBI" id="CHEBI:29999"/>
        <dbReference type="ChEBI" id="CHEBI:30616"/>
        <dbReference type="ChEBI" id="CHEBI:83421"/>
        <dbReference type="ChEBI" id="CHEBI:456216"/>
        <dbReference type="EC" id="2.7.11.1"/>
    </reaction>
</comment>
<comment type="catalytic activity">
    <reaction>
        <text>L-threonyl-[protein] + ATP = O-phospho-L-threonyl-[protein] + ADP + H(+)</text>
        <dbReference type="Rhea" id="RHEA:46608"/>
        <dbReference type="Rhea" id="RHEA-COMP:11060"/>
        <dbReference type="Rhea" id="RHEA-COMP:11605"/>
        <dbReference type="ChEBI" id="CHEBI:15378"/>
        <dbReference type="ChEBI" id="CHEBI:30013"/>
        <dbReference type="ChEBI" id="CHEBI:30616"/>
        <dbReference type="ChEBI" id="CHEBI:61977"/>
        <dbReference type="ChEBI" id="CHEBI:456216"/>
        <dbReference type="EC" id="2.7.11.1"/>
    </reaction>
</comment>
<comment type="cofactor">
    <cofactor evidence="1">
        <name>Mg(2+)</name>
        <dbReference type="ChEBI" id="CHEBI:18420"/>
    </cofactor>
</comment>
<comment type="subunit">
    <text evidence="2 6">Associates with MYD88 and IRAK2 to form a ternary complex called the Myddosome (PubMed:16951688). Once phosphorylated, IRAK4 dissociates from the receptor complex and then associates with the TNF receptor-associated factor 6 (TRAF6), IRAK1, and PELI1; this intermediate complex is required for subsequent NF-kappa-B activation (PubMed:16951688). Direct binding of SMAD6 to PELI1 prevents complex formation and hence negatively regulates IL1R-TLR signaling and eventually NF-kappa-B-mediated gene expression (By similarity). Interacts with IL1RL1 (By similarity). Interacts (when phosphorylated) with IRAK1 (By similarity). May interact (when phosphorylated) with IRAK3 (By similarity).</text>
</comment>
<comment type="interaction">
    <interactant intactId="EBI-3842721">
        <id>Q8R4K2</id>
    </interactant>
    <interactant intactId="EBI-646179">
        <id>Q8K4B2</id>
        <label>Irak3</label>
    </interactant>
    <organismsDiffer>false</organismsDiffer>
    <experiments>7</experiments>
</comment>
<comment type="interaction">
    <interactant intactId="EBI-3842721">
        <id>Q8R4K2</id>
    </interactant>
    <interactant intactId="EBI-525108">
        <id>P22366</id>
        <label>Myd88</label>
    </interactant>
    <organismsDiffer>false</organismsDiffer>
    <experiments>8</experiments>
</comment>
<comment type="subcellular location">
    <subcellularLocation>
        <location evidence="1">Cytoplasm</location>
    </subcellularLocation>
</comment>
<comment type="PTM">
    <text evidence="1">Phosphorylated.</text>
</comment>
<comment type="disruption phenotype">
    <text evidence="5 7">Mice are strongly altered in their responses to viral and bacterial challenges due to a severe impairment of interleukin-1 and Toll-like receptor signaling pathways. Malt1 and Irak4 double knockout suggests an additional role of Irak4 in B-cell antigen receptor (BCR) mediated signaling pathway, since the double mutant inhibits B-cell proliferation.</text>
</comment>
<comment type="similarity">
    <text evidence="8">Belongs to the protein kinase superfamily. TKL Ser/Thr protein kinase family. Pelle subfamily.</text>
</comment>
<evidence type="ECO:0000250" key="1"/>
<evidence type="ECO:0000250" key="2">
    <source>
        <dbReference type="UniProtKB" id="Q9NWZ3"/>
    </source>
</evidence>
<evidence type="ECO:0000255" key="3">
    <source>
        <dbReference type="PROSITE-ProRule" id="PRU00159"/>
    </source>
</evidence>
<evidence type="ECO:0000256" key="4">
    <source>
        <dbReference type="SAM" id="MobiDB-lite"/>
    </source>
</evidence>
<evidence type="ECO:0000269" key="5">
    <source>
    </source>
</evidence>
<evidence type="ECO:0000269" key="6">
    <source>
    </source>
</evidence>
<evidence type="ECO:0000269" key="7">
    <source>
    </source>
</evidence>
<evidence type="ECO:0000305" key="8"/>
<evidence type="ECO:0007829" key="9">
    <source>
        <dbReference type="PDB" id="2A9I"/>
    </source>
</evidence>
<proteinExistence type="evidence at protein level"/>
<keyword id="KW-0002">3D-structure</keyword>
<keyword id="KW-0007">Acetylation</keyword>
<keyword id="KW-0067">ATP-binding</keyword>
<keyword id="KW-0963">Cytoplasm</keyword>
<keyword id="KW-0391">Immunity</keyword>
<keyword id="KW-0399">Innate immunity</keyword>
<keyword id="KW-0418">Kinase</keyword>
<keyword id="KW-0460">Magnesium</keyword>
<keyword id="KW-0547">Nucleotide-binding</keyword>
<keyword id="KW-0597">Phosphoprotein</keyword>
<keyword id="KW-1185">Reference proteome</keyword>
<keyword id="KW-0723">Serine/threonine-protein kinase</keyword>
<keyword id="KW-0808">Transferase</keyword>
<protein>
    <recommendedName>
        <fullName>Interleukin-1 receptor-associated kinase 4</fullName>
        <shortName>IRAK-4</shortName>
        <ecNumber>2.7.11.1</ecNumber>
    </recommendedName>
</protein>
<organism>
    <name type="scientific">Mus musculus</name>
    <name type="common">Mouse</name>
    <dbReference type="NCBI Taxonomy" id="10090"/>
    <lineage>
        <taxon>Eukaryota</taxon>
        <taxon>Metazoa</taxon>
        <taxon>Chordata</taxon>
        <taxon>Craniata</taxon>
        <taxon>Vertebrata</taxon>
        <taxon>Euteleostomi</taxon>
        <taxon>Mammalia</taxon>
        <taxon>Eutheria</taxon>
        <taxon>Euarchontoglires</taxon>
        <taxon>Glires</taxon>
        <taxon>Rodentia</taxon>
        <taxon>Myomorpha</taxon>
        <taxon>Muroidea</taxon>
        <taxon>Muridae</taxon>
        <taxon>Murinae</taxon>
        <taxon>Mus</taxon>
        <taxon>Mus</taxon>
    </lineage>
</organism>
<dbReference type="EC" id="2.7.11.1"/>
<dbReference type="EMBL" id="AF445803">
    <property type="protein sequence ID" value="AAM15773.1"/>
    <property type="molecule type" value="mRNA"/>
</dbReference>
<dbReference type="EMBL" id="AK028837">
    <property type="protein sequence ID" value="BAC26146.1"/>
    <property type="molecule type" value="mRNA"/>
</dbReference>
<dbReference type="EMBL" id="BC051676">
    <property type="protein sequence ID" value="AAH51676.1"/>
    <property type="molecule type" value="mRNA"/>
</dbReference>
<dbReference type="CCDS" id="CCDS27772.1"/>
<dbReference type="RefSeq" id="NP_084202.2">
    <property type="nucleotide sequence ID" value="NM_029926.5"/>
</dbReference>
<dbReference type="PDB" id="1WH4">
    <property type="method" value="NMR"/>
    <property type="chains" value="A=1-114"/>
</dbReference>
<dbReference type="PDB" id="2A9I">
    <property type="method" value="X-ray"/>
    <property type="resolution" value="1.70 A"/>
    <property type="chains" value="A=1-113"/>
</dbReference>
<dbReference type="PDBsum" id="1WH4"/>
<dbReference type="PDBsum" id="2A9I"/>
<dbReference type="BMRB" id="Q8R4K2"/>
<dbReference type="SMR" id="Q8R4K2"/>
<dbReference type="BioGRID" id="234465">
    <property type="interactions" value="6"/>
</dbReference>
<dbReference type="DIP" id="DIP-48996N"/>
<dbReference type="FunCoup" id="Q8R4K2">
    <property type="interactions" value="3671"/>
</dbReference>
<dbReference type="IntAct" id="Q8R4K2">
    <property type="interactions" value="9"/>
</dbReference>
<dbReference type="MINT" id="Q8R4K2"/>
<dbReference type="STRING" id="10090.ENSMUSP00000074471"/>
<dbReference type="BindingDB" id="Q8R4K2"/>
<dbReference type="ChEMBL" id="CHEMBL4630844"/>
<dbReference type="GuidetoPHARMACOLOGY" id="2045"/>
<dbReference type="iPTMnet" id="Q8R4K2"/>
<dbReference type="PhosphoSitePlus" id="Q8R4K2"/>
<dbReference type="PaxDb" id="10090-ENSMUSP00000074471"/>
<dbReference type="ProteomicsDB" id="269095"/>
<dbReference type="Pumba" id="Q8R4K2"/>
<dbReference type="Antibodypedia" id="696">
    <property type="antibodies" value="776 antibodies from 42 providers"/>
</dbReference>
<dbReference type="DNASU" id="266632"/>
<dbReference type="Ensembl" id="ENSMUST00000074936.10">
    <property type="protein sequence ID" value="ENSMUSP00000074471.4"/>
    <property type="gene ID" value="ENSMUSG00000059883.17"/>
</dbReference>
<dbReference type="GeneID" id="266632"/>
<dbReference type="KEGG" id="mmu:266632"/>
<dbReference type="UCSC" id="uc007xjj.2">
    <property type="organism name" value="mouse"/>
</dbReference>
<dbReference type="AGR" id="MGI:2182474"/>
<dbReference type="CTD" id="51135"/>
<dbReference type="MGI" id="MGI:2182474">
    <property type="gene designation" value="Irak4"/>
</dbReference>
<dbReference type="VEuPathDB" id="HostDB:ENSMUSG00000059883"/>
<dbReference type="eggNOG" id="KOG1187">
    <property type="taxonomic scope" value="Eukaryota"/>
</dbReference>
<dbReference type="GeneTree" id="ENSGT00940000158792"/>
<dbReference type="HOGENOM" id="CLU_000288_21_15_1"/>
<dbReference type="InParanoid" id="Q8R4K2"/>
<dbReference type="OMA" id="MQHYQSM"/>
<dbReference type="OrthoDB" id="4062651at2759"/>
<dbReference type="PhylomeDB" id="Q8R4K2"/>
<dbReference type="TreeFam" id="TF351380"/>
<dbReference type="Reactome" id="R-MMU-1257604">
    <property type="pathway name" value="PIP3 activates AKT signaling"/>
</dbReference>
<dbReference type="Reactome" id="R-MMU-6811558">
    <property type="pathway name" value="PI5P, PP2A and IER3 Regulate PI3K/AKT Signaling"/>
</dbReference>
<dbReference type="Reactome" id="R-MMU-9020702">
    <property type="pathway name" value="Interleukin-1 signaling"/>
</dbReference>
<dbReference type="BioGRID-ORCS" id="266632">
    <property type="hits" value="0 hits in 80 CRISPR screens"/>
</dbReference>
<dbReference type="ChiTaRS" id="Irak4">
    <property type="organism name" value="mouse"/>
</dbReference>
<dbReference type="EvolutionaryTrace" id="Q8R4K2"/>
<dbReference type="PRO" id="PR:Q8R4K2"/>
<dbReference type="Proteomes" id="UP000000589">
    <property type="component" value="Chromosome 15"/>
</dbReference>
<dbReference type="RNAct" id="Q8R4K2">
    <property type="molecule type" value="protein"/>
</dbReference>
<dbReference type="Bgee" id="ENSMUSG00000059883">
    <property type="expression patterns" value="Expressed in granulocyte and 137 other cell types or tissues"/>
</dbReference>
<dbReference type="ExpressionAtlas" id="Q8R4K2">
    <property type="expression patterns" value="baseline and differential"/>
</dbReference>
<dbReference type="GO" id="GO:0009986">
    <property type="term" value="C:cell surface"/>
    <property type="evidence" value="ECO:0007669"/>
    <property type="project" value="Ensembl"/>
</dbReference>
<dbReference type="GO" id="GO:0005737">
    <property type="term" value="C:cytoplasm"/>
    <property type="evidence" value="ECO:0007669"/>
    <property type="project" value="UniProtKB-SubCell"/>
</dbReference>
<dbReference type="GO" id="GO:0005615">
    <property type="term" value="C:extracellular space"/>
    <property type="evidence" value="ECO:0007669"/>
    <property type="project" value="Ensembl"/>
</dbReference>
<dbReference type="GO" id="GO:0005524">
    <property type="term" value="F:ATP binding"/>
    <property type="evidence" value="ECO:0007669"/>
    <property type="project" value="UniProtKB-KW"/>
</dbReference>
<dbReference type="GO" id="GO:0005149">
    <property type="term" value="F:interleukin-1 receptor binding"/>
    <property type="evidence" value="ECO:0000353"/>
    <property type="project" value="MGI"/>
</dbReference>
<dbReference type="GO" id="GO:0000287">
    <property type="term" value="F:magnesium ion binding"/>
    <property type="evidence" value="ECO:0007669"/>
    <property type="project" value="InterPro"/>
</dbReference>
<dbReference type="GO" id="GO:0019901">
    <property type="term" value="F:protein kinase binding"/>
    <property type="evidence" value="ECO:0007669"/>
    <property type="project" value="Ensembl"/>
</dbReference>
<dbReference type="GO" id="GO:0106310">
    <property type="term" value="F:protein serine kinase activity"/>
    <property type="evidence" value="ECO:0007669"/>
    <property type="project" value="RHEA"/>
</dbReference>
<dbReference type="GO" id="GO:0004674">
    <property type="term" value="F:protein serine/threonine kinase activity"/>
    <property type="evidence" value="ECO:0007669"/>
    <property type="project" value="UniProtKB-KW"/>
</dbReference>
<dbReference type="GO" id="GO:0019221">
    <property type="term" value="P:cytokine-mediated signaling pathway"/>
    <property type="evidence" value="ECO:0000314"/>
    <property type="project" value="MGI"/>
</dbReference>
<dbReference type="GO" id="GO:0045087">
    <property type="term" value="P:innate immune response"/>
    <property type="evidence" value="ECO:0007669"/>
    <property type="project" value="UniProtKB-KW"/>
</dbReference>
<dbReference type="GO" id="GO:0070498">
    <property type="term" value="P:interleukin-1-mediated signaling pathway"/>
    <property type="evidence" value="ECO:0007669"/>
    <property type="project" value="Ensembl"/>
</dbReference>
<dbReference type="GO" id="GO:0038172">
    <property type="term" value="P:interleukin-33-mediated signaling pathway"/>
    <property type="evidence" value="ECO:0007669"/>
    <property type="project" value="Ensembl"/>
</dbReference>
<dbReference type="GO" id="GO:0007254">
    <property type="term" value="P:JNK cascade"/>
    <property type="evidence" value="ECO:0007669"/>
    <property type="project" value="Ensembl"/>
</dbReference>
<dbReference type="GO" id="GO:0002446">
    <property type="term" value="P:neutrophil mediated immunity"/>
    <property type="evidence" value="ECO:0000250"/>
    <property type="project" value="UniProtKB"/>
</dbReference>
<dbReference type="GO" id="GO:1990266">
    <property type="term" value="P:neutrophil migration"/>
    <property type="evidence" value="ECO:0000250"/>
    <property type="project" value="UniProtKB"/>
</dbReference>
<dbReference type="GO" id="GO:0043123">
    <property type="term" value="P:positive regulation of canonical NF-kappaB signal transduction"/>
    <property type="evidence" value="ECO:0000266"/>
    <property type="project" value="MGI"/>
</dbReference>
<dbReference type="GO" id="GO:0048661">
    <property type="term" value="P:positive regulation of smooth muscle cell proliferation"/>
    <property type="evidence" value="ECO:0007669"/>
    <property type="project" value="Ensembl"/>
</dbReference>
<dbReference type="CDD" id="cd08793">
    <property type="entry name" value="Death_IRAK4"/>
    <property type="match status" value="1"/>
</dbReference>
<dbReference type="CDD" id="cd14158">
    <property type="entry name" value="STKc_IRAK4"/>
    <property type="match status" value="1"/>
</dbReference>
<dbReference type="FunFam" id="1.10.533.10:FF:000028">
    <property type="entry name" value="Interleukin 1 receptor-associated kinase 4"/>
    <property type="match status" value="1"/>
</dbReference>
<dbReference type="FunFam" id="1.10.510.10:FF:000414">
    <property type="entry name" value="Interleukin-1 receptor-associated kinase 4"/>
    <property type="match status" value="1"/>
</dbReference>
<dbReference type="FunFam" id="3.30.200.20:FF:000368">
    <property type="entry name" value="Interleukin-1 receptor-associated kinase 4"/>
    <property type="match status" value="1"/>
</dbReference>
<dbReference type="Gene3D" id="1.10.533.10">
    <property type="entry name" value="Death Domain, Fas"/>
    <property type="match status" value="1"/>
</dbReference>
<dbReference type="Gene3D" id="3.30.200.20">
    <property type="entry name" value="Phosphorylase Kinase, domain 1"/>
    <property type="match status" value="1"/>
</dbReference>
<dbReference type="Gene3D" id="1.10.510.10">
    <property type="entry name" value="Transferase(Phosphotransferase) domain 1"/>
    <property type="match status" value="1"/>
</dbReference>
<dbReference type="InterPro" id="IPR011029">
    <property type="entry name" value="DEATH-like_dom_sf"/>
</dbReference>
<dbReference type="InterPro" id="IPR017428">
    <property type="entry name" value="IRAK4"/>
</dbReference>
<dbReference type="InterPro" id="IPR037970">
    <property type="entry name" value="IRAK4_Death"/>
</dbReference>
<dbReference type="InterPro" id="IPR011009">
    <property type="entry name" value="Kinase-like_dom_sf"/>
</dbReference>
<dbReference type="InterPro" id="IPR051824">
    <property type="entry name" value="LRR_Rcpt-Like_S/T_Kinase"/>
</dbReference>
<dbReference type="InterPro" id="IPR000719">
    <property type="entry name" value="Prot_kinase_dom"/>
</dbReference>
<dbReference type="PANTHER" id="PTHR48006">
    <property type="entry name" value="LEUCINE-RICH REPEAT-CONTAINING PROTEIN DDB_G0281931-RELATED"/>
    <property type="match status" value="1"/>
</dbReference>
<dbReference type="PANTHER" id="PTHR48006:SF102">
    <property type="entry name" value="LEUCINE-RICH REPEAT-CONTAINING PROTEIN DDB_G0281931-RELATED"/>
    <property type="match status" value="1"/>
</dbReference>
<dbReference type="Pfam" id="PF00069">
    <property type="entry name" value="Pkinase"/>
    <property type="match status" value="1"/>
</dbReference>
<dbReference type="PIRSF" id="PIRSF038189">
    <property type="entry name" value="IRAK4"/>
    <property type="match status" value="1"/>
</dbReference>
<dbReference type="SMART" id="SM00220">
    <property type="entry name" value="S_TKc"/>
    <property type="match status" value="1"/>
</dbReference>
<dbReference type="SUPFAM" id="SSF47986">
    <property type="entry name" value="DEATH domain"/>
    <property type="match status" value="1"/>
</dbReference>
<dbReference type="SUPFAM" id="SSF56112">
    <property type="entry name" value="Protein kinase-like (PK-like)"/>
    <property type="match status" value="1"/>
</dbReference>
<dbReference type="PROSITE" id="PS50011">
    <property type="entry name" value="PROTEIN_KINASE_DOM"/>
    <property type="match status" value="1"/>
</dbReference>
<reference key="1">
    <citation type="journal article" date="2002" name="Proc. Natl. Acad. Sci. U.S.A.">
        <title>IRAK4: a novel member of the IRAK family with the properties of an IRAK-kinase.</title>
        <authorList>
            <person name="Li S."/>
            <person name="Strelow A."/>
            <person name="Fontana E.J."/>
            <person name="Wesche H."/>
        </authorList>
    </citation>
    <scope>NUCLEOTIDE SEQUENCE [MRNA]</scope>
    <source>
        <strain>BALB/cJ</strain>
    </source>
</reference>
<reference key="2">
    <citation type="journal article" date="2005" name="Science">
        <title>The transcriptional landscape of the mammalian genome.</title>
        <authorList>
            <person name="Carninci P."/>
            <person name="Kasukawa T."/>
            <person name="Katayama S."/>
            <person name="Gough J."/>
            <person name="Frith M.C."/>
            <person name="Maeda N."/>
            <person name="Oyama R."/>
            <person name="Ravasi T."/>
            <person name="Lenhard B."/>
            <person name="Wells C."/>
            <person name="Kodzius R."/>
            <person name="Shimokawa K."/>
            <person name="Bajic V.B."/>
            <person name="Brenner S.E."/>
            <person name="Batalov S."/>
            <person name="Forrest A.R."/>
            <person name="Zavolan M."/>
            <person name="Davis M.J."/>
            <person name="Wilming L.G."/>
            <person name="Aidinis V."/>
            <person name="Allen J.E."/>
            <person name="Ambesi-Impiombato A."/>
            <person name="Apweiler R."/>
            <person name="Aturaliya R.N."/>
            <person name="Bailey T.L."/>
            <person name="Bansal M."/>
            <person name="Baxter L."/>
            <person name="Beisel K.W."/>
            <person name="Bersano T."/>
            <person name="Bono H."/>
            <person name="Chalk A.M."/>
            <person name="Chiu K.P."/>
            <person name="Choudhary V."/>
            <person name="Christoffels A."/>
            <person name="Clutterbuck D.R."/>
            <person name="Crowe M.L."/>
            <person name="Dalla E."/>
            <person name="Dalrymple B.P."/>
            <person name="de Bono B."/>
            <person name="Della Gatta G."/>
            <person name="di Bernardo D."/>
            <person name="Down T."/>
            <person name="Engstrom P."/>
            <person name="Fagiolini M."/>
            <person name="Faulkner G."/>
            <person name="Fletcher C.F."/>
            <person name="Fukushima T."/>
            <person name="Furuno M."/>
            <person name="Futaki S."/>
            <person name="Gariboldi M."/>
            <person name="Georgii-Hemming P."/>
            <person name="Gingeras T.R."/>
            <person name="Gojobori T."/>
            <person name="Green R.E."/>
            <person name="Gustincich S."/>
            <person name="Harbers M."/>
            <person name="Hayashi Y."/>
            <person name="Hensch T.K."/>
            <person name="Hirokawa N."/>
            <person name="Hill D."/>
            <person name="Huminiecki L."/>
            <person name="Iacono M."/>
            <person name="Ikeo K."/>
            <person name="Iwama A."/>
            <person name="Ishikawa T."/>
            <person name="Jakt M."/>
            <person name="Kanapin A."/>
            <person name="Katoh M."/>
            <person name="Kawasawa Y."/>
            <person name="Kelso J."/>
            <person name="Kitamura H."/>
            <person name="Kitano H."/>
            <person name="Kollias G."/>
            <person name="Krishnan S.P."/>
            <person name="Kruger A."/>
            <person name="Kummerfeld S.K."/>
            <person name="Kurochkin I.V."/>
            <person name="Lareau L.F."/>
            <person name="Lazarevic D."/>
            <person name="Lipovich L."/>
            <person name="Liu J."/>
            <person name="Liuni S."/>
            <person name="McWilliam S."/>
            <person name="Madan Babu M."/>
            <person name="Madera M."/>
            <person name="Marchionni L."/>
            <person name="Matsuda H."/>
            <person name="Matsuzawa S."/>
            <person name="Miki H."/>
            <person name="Mignone F."/>
            <person name="Miyake S."/>
            <person name="Morris K."/>
            <person name="Mottagui-Tabar S."/>
            <person name="Mulder N."/>
            <person name="Nakano N."/>
            <person name="Nakauchi H."/>
            <person name="Ng P."/>
            <person name="Nilsson R."/>
            <person name="Nishiguchi S."/>
            <person name="Nishikawa S."/>
            <person name="Nori F."/>
            <person name="Ohara O."/>
            <person name="Okazaki Y."/>
            <person name="Orlando V."/>
            <person name="Pang K.C."/>
            <person name="Pavan W.J."/>
            <person name="Pavesi G."/>
            <person name="Pesole G."/>
            <person name="Petrovsky N."/>
            <person name="Piazza S."/>
            <person name="Reed J."/>
            <person name="Reid J.F."/>
            <person name="Ring B.Z."/>
            <person name="Ringwald M."/>
            <person name="Rost B."/>
            <person name="Ruan Y."/>
            <person name="Salzberg S.L."/>
            <person name="Sandelin A."/>
            <person name="Schneider C."/>
            <person name="Schoenbach C."/>
            <person name="Sekiguchi K."/>
            <person name="Semple C.A."/>
            <person name="Seno S."/>
            <person name="Sessa L."/>
            <person name="Sheng Y."/>
            <person name="Shibata Y."/>
            <person name="Shimada H."/>
            <person name="Shimada K."/>
            <person name="Silva D."/>
            <person name="Sinclair B."/>
            <person name="Sperling S."/>
            <person name="Stupka E."/>
            <person name="Sugiura K."/>
            <person name="Sultana R."/>
            <person name="Takenaka Y."/>
            <person name="Taki K."/>
            <person name="Tammoja K."/>
            <person name="Tan S.L."/>
            <person name="Tang S."/>
            <person name="Taylor M.S."/>
            <person name="Tegner J."/>
            <person name="Teichmann S.A."/>
            <person name="Ueda H.R."/>
            <person name="van Nimwegen E."/>
            <person name="Verardo R."/>
            <person name="Wei C.L."/>
            <person name="Yagi K."/>
            <person name="Yamanishi H."/>
            <person name="Zabarovsky E."/>
            <person name="Zhu S."/>
            <person name="Zimmer A."/>
            <person name="Hide W."/>
            <person name="Bult C."/>
            <person name="Grimmond S.M."/>
            <person name="Teasdale R.D."/>
            <person name="Liu E.T."/>
            <person name="Brusic V."/>
            <person name="Quackenbush J."/>
            <person name="Wahlestedt C."/>
            <person name="Mattick J.S."/>
            <person name="Hume D.A."/>
            <person name="Kai C."/>
            <person name="Sasaki D."/>
            <person name="Tomaru Y."/>
            <person name="Fukuda S."/>
            <person name="Kanamori-Katayama M."/>
            <person name="Suzuki M."/>
            <person name="Aoki J."/>
            <person name="Arakawa T."/>
            <person name="Iida J."/>
            <person name="Imamura K."/>
            <person name="Itoh M."/>
            <person name="Kato T."/>
            <person name="Kawaji H."/>
            <person name="Kawagashira N."/>
            <person name="Kawashima T."/>
            <person name="Kojima M."/>
            <person name="Kondo S."/>
            <person name="Konno H."/>
            <person name="Nakano K."/>
            <person name="Ninomiya N."/>
            <person name="Nishio T."/>
            <person name="Okada M."/>
            <person name="Plessy C."/>
            <person name="Shibata K."/>
            <person name="Shiraki T."/>
            <person name="Suzuki S."/>
            <person name="Tagami M."/>
            <person name="Waki K."/>
            <person name="Watahiki A."/>
            <person name="Okamura-Oho Y."/>
            <person name="Suzuki H."/>
            <person name="Kawai J."/>
            <person name="Hayashizaki Y."/>
        </authorList>
    </citation>
    <scope>NUCLEOTIDE SEQUENCE [LARGE SCALE MRNA]</scope>
    <source>
        <strain>C57BL/6J</strain>
        <tissue>Skin</tissue>
    </source>
</reference>
<reference key="3">
    <citation type="journal article" date="2004" name="Genome Res.">
        <title>The status, quality, and expansion of the NIH full-length cDNA project: the Mammalian Gene Collection (MGC).</title>
        <authorList>
            <consortium name="The MGC Project Team"/>
        </authorList>
    </citation>
    <scope>NUCLEOTIDE SEQUENCE [LARGE SCALE MRNA]</scope>
    <source>
        <strain>C57BL/6J</strain>
        <tissue>Embryo</tissue>
    </source>
</reference>
<reference key="4">
    <citation type="journal article" date="2002" name="Nature">
        <title>Severe impairment of interleukin-1 and Toll-like receptor signalling in mice lacking IRAK-4.</title>
        <authorList>
            <person name="Suzuki N."/>
            <person name="Suzuki S."/>
            <person name="Duncan G.S."/>
            <person name="Millar D.G."/>
            <person name="Wada T."/>
            <person name="Mirtsos C."/>
            <person name="Takada H."/>
            <person name="Wakeham A."/>
            <person name="Itie A."/>
            <person name="Li S."/>
            <person name="Penninger J.M."/>
            <person name="Wesche H."/>
            <person name="Ohashi P.S."/>
            <person name="Mak T.W."/>
            <person name="Yeh W.C."/>
        </authorList>
    </citation>
    <scope>DISRUPTION PHENOTYPE</scope>
</reference>
<reference key="5">
    <citation type="journal article" date="2006" name="Nat. Immunol.">
        <title>Smad6 negatively regulates interleukin 1-receptor-Toll-like receptor signaling through direct interaction with the adapter Pellino-1.</title>
        <authorList>
            <person name="Choi K.C."/>
            <person name="Lee Y.S."/>
            <person name="Lim S."/>
            <person name="Choi H.K."/>
            <person name="Lee C.H."/>
            <person name="Lee E.K."/>
            <person name="Hong S."/>
            <person name="Kim I.H."/>
            <person name="Kim S.J."/>
            <person name="Park S.H."/>
        </authorList>
    </citation>
    <scope>IDENTIFICATION IN COMPLEX WITH IRAK1; MYD88; PELI1 AND TRAF6</scope>
</reference>
<reference key="6">
    <citation type="journal article" date="2010" name="Cell">
        <title>A tissue-specific atlas of mouse protein phosphorylation and expression.</title>
        <authorList>
            <person name="Huttlin E.L."/>
            <person name="Jedrychowski M.P."/>
            <person name="Elias J.E."/>
            <person name="Goswami T."/>
            <person name="Rad R."/>
            <person name="Beausoleil S.A."/>
            <person name="Villen J."/>
            <person name="Haas W."/>
            <person name="Sowa M.E."/>
            <person name="Gygi S.P."/>
        </authorList>
    </citation>
    <scope>IDENTIFICATION BY MASS SPECTROMETRY [LARGE SCALE ANALYSIS]</scope>
    <source>
        <tissue>Spleen</tissue>
    </source>
</reference>
<reference key="7">
    <citation type="journal article" date="2011" name="Cell Commun. Signal.">
        <title>B cell antigen receptor-induced activation of an IRAK4-dependent signaling pathway revealed by a MALT1-IRAK4 double knockout mouse model.</title>
        <authorList>
            <person name="Dufner A."/>
            <person name="Schamel W.W."/>
        </authorList>
    </citation>
    <scope>DISRUPTION PHENOTYPE</scope>
</reference>
<reference key="8">
    <citation type="journal article" date="2005" name="J. Immunol.">
        <title>Molecular structure of the IL-1R-associated kinase-4 death domain and its implications for TLR signaling.</title>
        <authorList>
            <person name="Lasker M.V."/>
            <person name="Gajjar M.M."/>
            <person name="Nair S.K."/>
        </authorList>
    </citation>
    <scope>X-RAY CRYSTALLOGRAPHY (1.7 ANGSTROMS) OF 1-113</scope>
</reference>
<reference key="9">
    <citation type="submission" date="2004-11" db="PDB data bank">
        <title>Solution structure of the death domain of interleukin-1 receptor-associated kinase 4 (IRAK4) from Mus musculus.</title>
        <authorList>
            <consortium name="RIKEN structural genomics initiative (RSGI)"/>
        </authorList>
    </citation>
    <scope>STRUCTURE BY NMR OF 1-114</scope>
</reference>
<sequence>MNKPLTPSTYIRNLNVGILRKLSDFIDPQEGWKKLAVAIKKPSGDDRYNQFHIRRFEALLQTGKSPTCELLFDWGTTNCTVGDLVDLLVQIELFAPATLLLPDAVPQTVKSLPPREAATVAQTHGPCQEKDRTSVMPMPKLEHSCEPPDSSSPDNRSVESSDTRFHSFSFHELKSITNNFDEQPASAGGNRMGEGGFGVVYKGCVNNTIVAVKKLGAMVEISTEELKQQFDQEIKVMATCQHENLVELLGFSSDSDNLCLVYAYMPNGSLLDRLSCLDGTPPLSWHTRCKVAQGTANGIRFLHENHHIHRDIKSANILLDKDFTAKISDFGLARASARLAQTVMTSRIVGTTAYMAPEALRGEITPKSDIYSFGVVLLELITGLAAVDENREPQLLLDIKEEIEDEEKTIEDYTDEKMSDADPASVEAMYSAASQCLHEKKNRRPDIAKVQQLLQEMSA</sequence>
<gene>
    <name type="primary">Irak4</name>
</gene>